<name>ACSA_STRCO</name>
<organism>
    <name type="scientific">Streptomyces coelicolor (strain ATCC BAA-471 / A3(2) / M145)</name>
    <dbReference type="NCBI Taxonomy" id="100226"/>
    <lineage>
        <taxon>Bacteria</taxon>
        <taxon>Bacillati</taxon>
        <taxon>Actinomycetota</taxon>
        <taxon>Actinomycetes</taxon>
        <taxon>Kitasatosporales</taxon>
        <taxon>Streptomycetaceae</taxon>
        <taxon>Streptomyces</taxon>
        <taxon>Streptomyces albidoflavus group</taxon>
    </lineage>
</organism>
<proteinExistence type="inferred from homology"/>
<evidence type="ECO:0000255" key="1">
    <source>
        <dbReference type="HAMAP-Rule" id="MF_01123"/>
    </source>
</evidence>
<comment type="function">
    <text evidence="1">Catalyzes the conversion of acetate into acetyl-CoA (AcCoA), an essential intermediate at the junction of anabolic and catabolic pathways. AcsA undergoes a two-step reaction. In the first half reaction, AcsA combines acetate with ATP to form acetyl-adenylate (AcAMP) intermediate. In the second half reaction, it can then transfer the acetyl group from AcAMP to the sulfhydryl group of CoA, forming the product AcCoA.</text>
</comment>
<comment type="catalytic activity">
    <reaction evidence="1">
        <text>acetate + ATP + CoA = acetyl-CoA + AMP + diphosphate</text>
        <dbReference type="Rhea" id="RHEA:23176"/>
        <dbReference type="ChEBI" id="CHEBI:30089"/>
        <dbReference type="ChEBI" id="CHEBI:30616"/>
        <dbReference type="ChEBI" id="CHEBI:33019"/>
        <dbReference type="ChEBI" id="CHEBI:57287"/>
        <dbReference type="ChEBI" id="CHEBI:57288"/>
        <dbReference type="ChEBI" id="CHEBI:456215"/>
        <dbReference type="EC" id="6.2.1.1"/>
    </reaction>
</comment>
<comment type="cofactor">
    <cofactor evidence="1">
        <name>Mg(2+)</name>
        <dbReference type="ChEBI" id="CHEBI:18420"/>
    </cofactor>
</comment>
<comment type="PTM">
    <text evidence="1">Acetylated. Deacetylation by the SIR2-homolog deacetylase activates the enzyme.</text>
</comment>
<comment type="similarity">
    <text evidence="1">Belongs to the ATP-dependent AMP-binding enzyme family.</text>
</comment>
<sequence>MSNESLANLLKEERRFAPPADLAANANVTAEAYEQAKADRLGFWAEQARRLTWAKEPTETLDWSNPPFAKWFKDGTLNVAYNCVDRHVEAGNGDRVAIHFEGESGDSRALTYAQLKDEVSKAANALLELGVQKGDRVAIYMPMIPETAIAMLACARIGAAHSVVFGGFSSDALATRIQDADARVVITADGGYRRGKPSALKPAVDEAVERAGIVEHVLVVRRTGQDVAWDDSRDKWWHETVDGQSAEHTPEAFDAEHPLFILYTSGTTGKPKGILHTSGGYLTQTAYTHWAVFDLKPETDVFWCTADVGWVTGHSYIVYGPLANGATQVMYEGTPDTPHQGRFWEIVQKYGVTILYTAPTAIRTFMKWGDDIPAKFDLSSLRVLGSVGEPINPEAWIWYRKNIGADATPVVDTWWQTETGAMMITPLPGVTHAKPGSAQRPLPGISATVVDDEANEVPNGGGGYLVLTEPWPSMLRTIWGDDQRFIDTYWSRFEGKYFAGDGAKKDDDGDIWLLGRVDDVMLVSGHNISTTEVESALVSHPSVAEAAVVGATDETTGQAIVAFVILRGTTAESEDLVAELRNHVGATLGPIAKPKRILPVSELPKTRSGKIMRRLLRDVAENRQVGDVTTLADSTVMDLIQTKLPAAPSED</sequence>
<gene>
    <name evidence="1" type="primary">acsA</name>
    <name type="ordered locus">SCO3563</name>
    <name type="ORF">SCH5.26</name>
</gene>
<keyword id="KW-0007">Acetylation</keyword>
<keyword id="KW-0067">ATP-binding</keyword>
<keyword id="KW-0436">Ligase</keyword>
<keyword id="KW-0460">Magnesium</keyword>
<keyword id="KW-0479">Metal-binding</keyword>
<keyword id="KW-0547">Nucleotide-binding</keyword>
<keyword id="KW-1185">Reference proteome</keyword>
<reference key="1">
    <citation type="journal article" date="2002" name="Nature">
        <title>Complete genome sequence of the model actinomycete Streptomyces coelicolor A3(2).</title>
        <authorList>
            <person name="Bentley S.D."/>
            <person name="Chater K.F."/>
            <person name="Cerdeno-Tarraga A.-M."/>
            <person name="Challis G.L."/>
            <person name="Thomson N.R."/>
            <person name="James K.D."/>
            <person name="Harris D.E."/>
            <person name="Quail M.A."/>
            <person name="Kieser H."/>
            <person name="Harper D."/>
            <person name="Bateman A."/>
            <person name="Brown S."/>
            <person name="Chandra G."/>
            <person name="Chen C.W."/>
            <person name="Collins M."/>
            <person name="Cronin A."/>
            <person name="Fraser A."/>
            <person name="Goble A."/>
            <person name="Hidalgo J."/>
            <person name="Hornsby T."/>
            <person name="Howarth S."/>
            <person name="Huang C.-H."/>
            <person name="Kieser T."/>
            <person name="Larke L."/>
            <person name="Murphy L.D."/>
            <person name="Oliver K."/>
            <person name="O'Neil S."/>
            <person name="Rabbinowitsch E."/>
            <person name="Rajandream M.A."/>
            <person name="Rutherford K.M."/>
            <person name="Rutter S."/>
            <person name="Seeger K."/>
            <person name="Saunders D."/>
            <person name="Sharp S."/>
            <person name="Squares R."/>
            <person name="Squares S."/>
            <person name="Taylor K."/>
            <person name="Warren T."/>
            <person name="Wietzorrek A."/>
            <person name="Woodward J.R."/>
            <person name="Barrell B.G."/>
            <person name="Parkhill J."/>
            <person name="Hopwood D.A."/>
        </authorList>
    </citation>
    <scope>NUCLEOTIDE SEQUENCE [LARGE SCALE GENOMIC DNA]</scope>
    <source>
        <strain>ATCC BAA-471 / A3(2) / M145</strain>
    </source>
</reference>
<protein>
    <recommendedName>
        <fullName evidence="1">Acetyl-coenzyme A synthetase</fullName>
        <shortName evidence="1">AcCoA synthetase</shortName>
        <shortName evidence="1">Acs</shortName>
        <ecNumber evidence="1">6.2.1.1</ecNumber>
    </recommendedName>
    <alternativeName>
        <fullName evidence="1">Acetate--CoA ligase</fullName>
    </alternativeName>
    <alternativeName>
        <fullName evidence="1">Acyl-activating enzyme</fullName>
    </alternativeName>
</protein>
<dbReference type="EC" id="6.2.1.1" evidence="1"/>
<dbReference type="EMBL" id="AL939117">
    <property type="protein sequence ID" value="CAB38500.1"/>
    <property type="molecule type" value="Genomic_DNA"/>
</dbReference>
<dbReference type="PIR" id="T36684">
    <property type="entry name" value="T36684"/>
</dbReference>
<dbReference type="RefSeq" id="NP_627761.1">
    <property type="nucleotide sequence ID" value="NC_003888.3"/>
</dbReference>
<dbReference type="SMR" id="Q9X928"/>
<dbReference type="FunCoup" id="Q9X928">
    <property type="interactions" value="445"/>
</dbReference>
<dbReference type="STRING" id="100226.gene:17761185"/>
<dbReference type="PaxDb" id="100226-SCO3563"/>
<dbReference type="KEGG" id="sco:SCO3563"/>
<dbReference type="PATRIC" id="fig|100226.15.peg.3619"/>
<dbReference type="eggNOG" id="COG0365">
    <property type="taxonomic scope" value="Bacteria"/>
</dbReference>
<dbReference type="HOGENOM" id="CLU_000022_3_6_11"/>
<dbReference type="InParanoid" id="Q9X928"/>
<dbReference type="OrthoDB" id="9803968at2"/>
<dbReference type="PhylomeDB" id="Q9X928"/>
<dbReference type="Proteomes" id="UP000001973">
    <property type="component" value="Chromosome"/>
</dbReference>
<dbReference type="GO" id="GO:0005829">
    <property type="term" value="C:cytosol"/>
    <property type="evidence" value="ECO:0000318"/>
    <property type="project" value="GO_Central"/>
</dbReference>
<dbReference type="GO" id="GO:0003987">
    <property type="term" value="F:acetate-CoA ligase activity"/>
    <property type="evidence" value="ECO:0000318"/>
    <property type="project" value="GO_Central"/>
</dbReference>
<dbReference type="GO" id="GO:0016208">
    <property type="term" value="F:AMP binding"/>
    <property type="evidence" value="ECO:0007669"/>
    <property type="project" value="InterPro"/>
</dbReference>
<dbReference type="GO" id="GO:0005524">
    <property type="term" value="F:ATP binding"/>
    <property type="evidence" value="ECO:0007669"/>
    <property type="project" value="UniProtKB-KW"/>
</dbReference>
<dbReference type="GO" id="GO:0046872">
    <property type="term" value="F:metal ion binding"/>
    <property type="evidence" value="ECO:0007669"/>
    <property type="project" value="UniProtKB-KW"/>
</dbReference>
<dbReference type="GO" id="GO:0006085">
    <property type="term" value="P:acetyl-CoA biosynthetic process"/>
    <property type="evidence" value="ECO:0000318"/>
    <property type="project" value="GO_Central"/>
</dbReference>
<dbReference type="GO" id="GO:0019427">
    <property type="term" value="P:acetyl-CoA biosynthetic process from acetate"/>
    <property type="evidence" value="ECO:0007669"/>
    <property type="project" value="InterPro"/>
</dbReference>
<dbReference type="CDD" id="cd05966">
    <property type="entry name" value="ACS"/>
    <property type="match status" value="1"/>
</dbReference>
<dbReference type="FunFam" id="3.40.50.12780:FF:000001">
    <property type="entry name" value="Acetyl-coenzyme A synthetase"/>
    <property type="match status" value="1"/>
</dbReference>
<dbReference type="Gene3D" id="3.30.300.30">
    <property type="match status" value="1"/>
</dbReference>
<dbReference type="Gene3D" id="3.40.50.12780">
    <property type="entry name" value="N-terminal domain of ligase-like"/>
    <property type="match status" value="1"/>
</dbReference>
<dbReference type="HAMAP" id="MF_01123">
    <property type="entry name" value="Ac_CoA_synth"/>
    <property type="match status" value="1"/>
</dbReference>
<dbReference type="InterPro" id="IPR011904">
    <property type="entry name" value="Ac_CoA_lig"/>
</dbReference>
<dbReference type="InterPro" id="IPR032387">
    <property type="entry name" value="ACAS_N"/>
</dbReference>
<dbReference type="InterPro" id="IPR025110">
    <property type="entry name" value="AMP-bd_C"/>
</dbReference>
<dbReference type="InterPro" id="IPR045851">
    <property type="entry name" value="AMP-bd_C_sf"/>
</dbReference>
<dbReference type="InterPro" id="IPR020845">
    <property type="entry name" value="AMP-binding_CS"/>
</dbReference>
<dbReference type="InterPro" id="IPR000873">
    <property type="entry name" value="AMP-dep_synth/lig_dom"/>
</dbReference>
<dbReference type="InterPro" id="IPR042099">
    <property type="entry name" value="ANL_N_sf"/>
</dbReference>
<dbReference type="NCBIfam" id="TIGR02188">
    <property type="entry name" value="Ac_CoA_lig_AcsA"/>
    <property type="match status" value="1"/>
</dbReference>
<dbReference type="NCBIfam" id="NF001208">
    <property type="entry name" value="PRK00174.1"/>
    <property type="match status" value="1"/>
</dbReference>
<dbReference type="PANTHER" id="PTHR24095">
    <property type="entry name" value="ACETYL-COENZYME A SYNTHETASE"/>
    <property type="match status" value="1"/>
</dbReference>
<dbReference type="PANTHER" id="PTHR24095:SF14">
    <property type="entry name" value="ACETYL-COENZYME A SYNTHETASE 1"/>
    <property type="match status" value="1"/>
</dbReference>
<dbReference type="Pfam" id="PF16177">
    <property type="entry name" value="ACAS_N"/>
    <property type="match status" value="1"/>
</dbReference>
<dbReference type="Pfam" id="PF00501">
    <property type="entry name" value="AMP-binding"/>
    <property type="match status" value="1"/>
</dbReference>
<dbReference type="Pfam" id="PF13193">
    <property type="entry name" value="AMP-binding_C"/>
    <property type="match status" value="1"/>
</dbReference>
<dbReference type="SUPFAM" id="SSF56801">
    <property type="entry name" value="Acetyl-CoA synthetase-like"/>
    <property type="match status" value="1"/>
</dbReference>
<dbReference type="PROSITE" id="PS00455">
    <property type="entry name" value="AMP_BINDING"/>
    <property type="match status" value="1"/>
</dbReference>
<accession>Q9X928</accession>
<feature type="chain" id="PRO_0000208389" description="Acetyl-coenzyme A synthetase">
    <location>
        <begin position="1"/>
        <end position="651"/>
    </location>
</feature>
<feature type="binding site" evidence="1">
    <location>
        <begin position="193"/>
        <end position="196"/>
    </location>
    <ligand>
        <name>CoA</name>
        <dbReference type="ChEBI" id="CHEBI:57287"/>
    </ligand>
</feature>
<feature type="binding site" evidence="1">
    <location>
        <position position="312"/>
    </location>
    <ligand>
        <name>CoA</name>
        <dbReference type="ChEBI" id="CHEBI:57287"/>
    </ligand>
</feature>
<feature type="binding site" evidence="1">
    <location>
        <begin position="388"/>
        <end position="390"/>
    </location>
    <ligand>
        <name>ATP</name>
        <dbReference type="ChEBI" id="CHEBI:30616"/>
    </ligand>
</feature>
<feature type="binding site" evidence="1">
    <location>
        <begin position="412"/>
        <end position="417"/>
    </location>
    <ligand>
        <name>ATP</name>
        <dbReference type="ChEBI" id="CHEBI:30616"/>
    </ligand>
</feature>
<feature type="binding site" evidence="1">
    <location>
        <position position="501"/>
    </location>
    <ligand>
        <name>ATP</name>
        <dbReference type="ChEBI" id="CHEBI:30616"/>
    </ligand>
</feature>
<feature type="binding site" evidence="1">
    <location>
        <position position="516"/>
    </location>
    <ligand>
        <name>ATP</name>
        <dbReference type="ChEBI" id="CHEBI:30616"/>
    </ligand>
</feature>
<feature type="binding site" evidence="1">
    <location>
        <position position="524"/>
    </location>
    <ligand>
        <name>CoA</name>
        <dbReference type="ChEBI" id="CHEBI:57287"/>
    </ligand>
</feature>
<feature type="binding site" evidence="1">
    <location>
        <position position="538"/>
    </location>
    <ligand>
        <name>Mg(2+)</name>
        <dbReference type="ChEBI" id="CHEBI:18420"/>
    </ligand>
</feature>
<feature type="binding site" evidence="1">
    <location>
        <position position="540"/>
    </location>
    <ligand>
        <name>Mg(2+)</name>
        <dbReference type="ChEBI" id="CHEBI:18420"/>
    </ligand>
</feature>
<feature type="binding site" evidence="1">
    <location>
        <position position="543"/>
    </location>
    <ligand>
        <name>Mg(2+)</name>
        <dbReference type="ChEBI" id="CHEBI:18420"/>
    </ligand>
</feature>
<feature type="modified residue" description="N6-acetyllysine" evidence="1">
    <location>
        <position position="610"/>
    </location>
</feature>